<protein>
    <recommendedName>
        <fullName evidence="1">Probable cytosol aminopeptidase</fullName>
        <ecNumber evidence="1">3.4.11.1</ecNumber>
    </recommendedName>
    <alternativeName>
        <fullName evidence="1">Leucine aminopeptidase</fullName>
        <shortName evidence="1">LAP</shortName>
        <ecNumber evidence="1">3.4.11.10</ecNumber>
    </alternativeName>
    <alternativeName>
        <fullName evidence="1">Leucyl aminopeptidase</fullName>
    </alternativeName>
</protein>
<accession>Q87LG8</accession>
<keyword id="KW-0031">Aminopeptidase</keyword>
<keyword id="KW-0963">Cytoplasm</keyword>
<keyword id="KW-0378">Hydrolase</keyword>
<keyword id="KW-0464">Manganese</keyword>
<keyword id="KW-0479">Metal-binding</keyword>
<keyword id="KW-0645">Protease</keyword>
<proteinExistence type="inferred from homology"/>
<gene>
    <name evidence="1" type="primary">pepA</name>
    <name type="ordered locus">VP2644</name>
</gene>
<organism>
    <name type="scientific">Vibrio parahaemolyticus serotype O3:K6 (strain RIMD 2210633)</name>
    <dbReference type="NCBI Taxonomy" id="223926"/>
    <lineage>
        <taxon>Bacteria</taxon>
        <taxon>Pseudomonadati</taxon>
        <taxon>Pseudomonadota</taxon>
        <taxon>Gammaproteobacteria</taxon>
        <taxon>Vibrionales</taxon>
        <taxon>Vibrionaceae</taxon>
        <taxon>Vibrio</taxon>
    </lineage>
</organism>
<name>AMPA_VIBPA</name>
<reference key="1">
    <citation type="journal article" date="2003" name="Lancet">
        <title>Genome sequence of Vibrio parahaemolyticus: a pathogenic mechanism distinct from that of V. cholerae.</title>
        <authorList>
            <person name="Makino K."/>
            <person name="Oshima K."/>
            <person name="Kurokawa K."/>
            <person name="Yokoyama K."/>
            <person name="Uda T."/>
            <person name="Tagomori K."/>
            <person name="Iijima Y."/>
            <person name="Najima M."/>
            <person name="Nakano M."/>
            <person name="Yamashita A."/>
            <person name="Kubota Y."/>
            <person name="Kimura S."/>
            <person name="Yasunaga T."/>
            <person name="Honda T."/>
            <person name="Shinagawa H."/>
            <person name="Hattori M."/>
            <person name="Iida T."/>
        </authorList>
    </citation>
    <scope>NUCLEOTIDE SEQUENCE [LARGE SCALE GENOMIC DNA]</scope>
    <source>
        <strain>RIMD 2210633</strain>
    </source>
</reference>
<feature type="chain" id="PRO_0000165810" description="Probable cytosol aminopeptidase">
    <location>
        <begin position="1"/>
        <end position="502"/>
    </location>
</feature>
<feature type="active site" evidence="1">
    <location>
        <position position="281"/>
    </location>
</feature>
<feature type="active site" evidence="1">
    <location>
        <position position="355"/>
    </location>
</feature>
<feature type="binding site" evidence="1">
    <location>
        <position position="269"/>
    </location>
    <ligand>
        <name>Mn(2+)</name>
        <dbReference type="ChEBI" id="CHEBI:29035"/>
        <label>2</label>
    </ligand>
</feature>
<feature type="binding site" evidence="1">
    <location>
        <position position="274"/>
    </location>
    <ligand>
        <name>Mn(2+)</name>
        <dbReference type="ChEBI" id="CHEBI:29035"/>
        <label>1</label>
    </ligand>
</feature>
<feature type="binding site" evidence="1">
    <location>
        <position position="274"/>
    </location>
    <ligand>
        <name>Mn(2+)</name>
        <dbReference type="ChEBI" id="CHEBI:29035"/>
        <label>2</label>
    </ligand>
</feature>
<feature type="binding site" evidence="1">
    <location>
        <position position="292"/>
    </location>
    <ligand>
        <name>Mn(2+)</name>
        <dbReference type="ChEBI" id="CHEBI:29035"/>
        <label>2</label>
    </ligand>
</feature>
<feature type="binding site" evidence="1">
    <location>
        <position position="351"/>
    </location>
    <ligand>
        <name>Mn(2+)</name>
        <dbReference type="ChEBI" id="CHEBI:29035"/>
        <label>1</label>
    </ligand>
</feature>
<feature type="binding site" evidence="1">
    <location>
        <position position="353"/>
    </location>
    <ligand>
        <name>Mn(2+)</name>
        <dbReference type="ChEBI" id="CHEBI:29035"/>
        <label>1</label>
    </ligand>
</feature>
<feature type="binding site" evidence="1">
    <location>
        <position position="353"/>
    </location>
    <ligand>
        <name>Mn(2+)</name>
        <dbReference type="ChEBI" id="CHEBI:29035"/>
        <label>2</label>
    </ligand>
</feature>
<dbReference type="EC" id="3.4.11.1" evidence="1"/>
<dbReference type="EC" id="3.4.11.10" evidence="1"/>
<dbReference type="EMBL" id="BA000031">
    <property type="protein sequence ID" value="BAC60907.1"/>
    <property type="molecule type" value="Genomic_DNA"/>
</dbReference>
<dbReference type="RefSeq" id="NP_799023.1">
    <property type="nucleotide sequence ID" value="NC_004603.1"/>
</dbReference>
<dbReference type="RefSeq" id="WP_005461107.1">
    <property type="nucleotide sequence ID" value="NC_004603.1"/>
</dbReference>
<dbReference type="SMR" id="Q87LG8"/>
<dbReference type="MEROPS" id="M17.003"/>
<dbReference type="GeneID" id="1190189"/>
<dbReference type="KEGG" id="vpa:VP2644"/>
<dbReference type="PATRIC" id="fig|223926.6.peg.2540"/>
<dbReference type="eggNOG" id="COG0260">
    <property type="taxonomic scope" value="Bacteria"/>
</dbReference>
<dbReference type="HOGENOM" id="CLU_013734_2_2_6"/>
<dbReference type="Proteomes" id="UP000002493">
    <property type="component" value="Chromosome 1"/>
</dbReference>
<dbReference type="GO" id="GO:0005737">
    <property type="term" value="C:cytoplasm"/>
    <property type="evidence" value="ECO:0007669"/>
    <property type="project" value="UniProtKB-SubCell"/>
</dbReference>
<dbReference type="GO" id="GO:0030145">
    <property type="term" value="F:manganese ion binding"/>
    <property type="evidence" value="ECO:0007669"/>
    <property type="project" value="UniProtKB-UniRule"/>
</dbReference>
<dbReference type="GO" id="GO:0070006">
    <property type="term" value="F:metalloaminopeptidase activity"/>
    <property type="evidence" value="ECO:0007669"/>
    <property type="project" value="InterPro"/>
</dbReference>
<dbReference type="GO" id="GO:0006508">
    <property type="term" value="P:proteolysis"/>
    <property type="evidence" value="ECO:0007669"/>
    <property type="project" value="UniProtKB-KW"/>
</dbReference>
<dbReference type="CDD" id="cd00433">
    <property type="entry name" value="Peptidase_M17"/>
    <property type="match status" value="1"/>
</dbReference>
<dbReference type="FunFam" id="3.40.220.10:FF:000001">
    <property type="entry name" value="Probable cytosol aminopeptidase"/>
    <property type="match status" value="1"/>
</dbReference>
<dbReference type="FunFam" id="3.40.630.10:FF:000004">
    <property type="entry name" value="Probable cytosol aminopeptidase"/>
    <property type="match status" value="1"/>
</dbReference>
<dbReference type="Gene3D" id="3.40.220.10">
    <property type="entry name" value="Leucine Aminopeptidase, subunit E, domain 1"/>
    <property type="match status" value="1"/>
</dbReference>
<dbReference type="Gene3D" id="3.40.630.10">
    <property type="entry name" value="Zn peptidases"/>
    <property type="match status" value="1"/>
</dbReference>
<dbReference type="HAMAP" id="MF_00181">
    <property type="entry name" value="Cytosol_peptidase_M17"/>
    <property type="match status" value="1"/>
</dbReference>
<dbReference type="InterPro" id="IPR011356">
    <property type="entry name" value="Leucine_aapep/pepB"/>
</dbReference>
<dbReference type="InterPro" id="IPR043472">
    <property type="entry name" value="Macro_dom-like"/>
</dbReference>
<dbReference type="InterPro" id="IPR000819">
    <property type="entry name" value="Peptidase_M17_C"/>
</dbReference>
<dbReference type="InterPro" id="IPR023042">
    <property type="entry name" value="Peptidase_M17_leu_NH2_pept"/>
</dbReference>
<dbReference type="InterPro" id="IPR008283">
    <property type="entry name" value="Peptidase_M17_N"/>
</dbReference>
<dbReference type="NCBIfam" id="NF002072">
    <property type="entry name" value="PRK00913.1-1"/>
    <property type="match status" value="1"/>
</dbReference>
<dbReference type="NCBIfam" id="NF002073">
    <property type="entry name" value="PRK00913.1-2"/>
    <property type="match status" value="1"/>
</dbReference>
<dbReference type="NCBIfam" id="NF002074">
    <property type="entry name" value="PRK00913.1-4"/>
    <property type="match status" value="1"/>
</dbReference>
<dbReference type="PANTHER" id="PTHR11963:SF23">
    <property type="entry name" value="CYTOSOL AMINOPEPTIDASE"/>
    <property type="match status" value="1"/>
</dbReference>
<dbReference type="PANTHER" id="PTHR11963">
    <property type="entry name" value="LEUCINE AMINOPEPTIDASE-RELATED"/>
    <property type="match status" value="1"/>
</dbReference>
<dbReference type="Pfam" id="PF00883">
    <property type="entry name" value="Peptidase_M17"/>
    <property type="match status" value="1"/>
</dbReference>
<dbReference type="Pfam" id="PF02789">
    <property type="entry name" value="Peptidase_M17_N"/>
    <property type="match status" value="1"/>
</dbReference>
<dbReference type="PRINTS" id="PR00481">
    <property type="entry name" value="LAMNOPPTDASE"/>
</dbReference>
<dbReference type="SUPFAM" id="SSF52949">
    <property type="entry name" value="Macro domain-like"/>
    <property type="match status" value="1"/>
</dbReference>
<dbReference type="SUPFAM" id="SSF53187">
    <property type="entry name" value="Zn-dependent exopeptidases"/>
    <property type="match status" value="1"/>
</dbReference>
<dbReference type="PROSITE" id="PS00631">
    <property type="entry name" value="CYTOSOL_AP"/>
    <property type="match status" value="1"/>
</dbReference>
<evidence type="ECO:0000255" key="1">
    <source>
        <dbReference type="HAMAP-Rule" id="MF_00181"/>
    </source>
</evidence>
<comment type="function">
    <text evidence="1">Presumably involved in the processing and regular turnover of intracellular proteins. Catalyzes the removal of unsubstituted N-terminal amino acids from various peptides.</text>
</comment>
<comment type="catalytic activity">
    <reaction evidence="1">
        <text>Release of an N-terminal amino acid, Xaa-|-Yaa-, in which Xaa is preferably Leu, but may be other amino acids including Pro although not Arg or Lys, and Yaa may be Pro. Amino acid amides and methyl esters are also readily hydrolyzed, but rates on arylamides are exceedingly low.</text>
        <dbReference type="EC" id="3.4.11.1"/>
    </reaction>
</comment>
<comment type="catalytic activity">
    <reaction evidence="1">
        <text>Release of an N-terminal amino acid, preferentially leucine, but not glutamic or aspartic acids.</text>
        <dbReference type="EC" id="3.4.11.10"/>
    </reaction>
</comment>
<comment type="cofactor">
    <cofactor evidence="1">
        <name>Mn(2+)</name>
        <dbReference type="ChEBI" id="CHEBI:29035"/>
    </cofactor>
    <text evidence="1">Binds 2 manganese ions per subunit.</text>
</comment>
<comment type="subcellular location">
    <subcellularLocation>
        <location evidence="1">Cytoplasm</location>
    </subcellularLocation>
</comment>
<comment type="similarity">
    <text evidence="1">Belongs to the peptidase M17 family.</text>
</comment>
<sequence>MEFSVKSGSPEKQRSACIVVGVFEPRRLSPVAEQLDKISDGYISSLLRRGDLEGKPGQMLLLHQVPGVLSERVLLVGCGKERELGERQYKEIIQKTISTLNETGSMEAVCFLTELHVKGRDTYWKVRQAVEATKDGLYTFNQFKSVKPETRRPLRKLVFNVPTRRELSLGEKAITHGLAIASGVKASKDLGNMPPNVANPAYLASQARRLADDYESVTTKIIGEQEMEKLGMTSYLAVGRGSKNESMMSIIEYKGNPDSDAKPIVLVGKGLTFDSGGISLKPGEGMDEMKYDMCGAASVFGTMKALAKLNLPINVIGVLAGCENMPGSNAYRPGDILTTMSGQTVEVLNTDAEGRLVLCDALTYVERFEPDCVVDVATLTGACVIALGHHISGVLSNHNPLAHELVNASEQSSDRAWRLPMADEYHEQLKSPFADMANIGGRPGGTITAGCFLSKFAKKYNWAHIDIAGTAWKSGAAKGSTGRPVSMLVQFLLNRSGQETEE</sequence>